<sequence>MILSDEKCDFLESIASFLSPKDVELVFVDSKEMQEINLEQRKQDKTTDVLSFPLENIDESLPLGSVVINVDLAKEKAKELGHSYEEEISLLFIHAMLHLLGFDHENDNGEMREKEKELIEHFNLPKSLIVRTLED</sequence>
<accession>Q9PJ06</accession>
<accession>Q0PC16</accession>
<reference key="1">
    <citation type="journal article" date="2000" name="Nature">
        <title>The genome sequence of the food-borne pathogen Campylobacter jejuni reveals hypervariable sequences.</title>
        <authorList>
            <person name="Parkhill J."/>
            <person name="Wren B.W."/>
            <person name="Mungall K.L."/>
            <person name="Ketley J.M."/>
            <person name="Churcher C.M."/>
            <person name="Basham D."/>
            <person name="Chillingworth T."/>
            <person name="Davies R.M."/>
            <person name="Feltwell T."/>
            <person name="Holroyd S."/>
            <person name="Jagels K."/>
            <person name="Karlyshev A.V."/>
            <person name="Moule S."/>
            <person name="Pallen M.J."/>
            <person name="Penn C.W."/>
            <person name="Quail M.A."/>
            <person name="Rajandream M.A."/>
            <person name="Rutherford K.M."/>
            <person name="van Vliet A.H.M."/>
            <person name="Whitehead S."/>
            <person name="Barrell B.G."/>
        </authorList>
    </citation>
    <scope>NUCLEOTIDE SEQUENCE [LARGE SCALE GENOMIC DNA]</scope>
    <source>
        <strain>ATCC 700819 / NCTC 11168</strain>
    </source>
</reference>
<keyword id="KW-0963">Cytoplasm</keyword>
<keyword id="KW-0255">Endonuclease</keyword>
<keyword id="KW-0378">Hydrolase</keyword>
<keyword id="KW-0479">Metal-binding</keyword>
<keyword id="KW-0540">Nuclease</keyword>
<keyword id="KW-1185">Reference proteome</keyword>
<keyword id="KW-0690">Ribosome biogenesis</keyword>
<keyword id="KW-0698">rRNA processing</keyword>
<keyword id="KW-0862">Zinc</keyword>
<comment type="function">
    <text evidence="1">Single strand-specific metallo-endoribonuclease involved in late-stage 70S ribosome quality control and in maturation of the 3' terminus of the 16S rRNA.</text>
</comment>
<comment type="cofactor">
    <cofactor evidence="1">
        <name>Zn(2+)</name>
        <dbReference type="ChEBI" id="CHEBI:29105"/>
    </cofactor>
    <text evidence="1">Binds 1 zinc ion.</text>
</comment>
<comment type="subcellular location">
    <subcellularLocation>
        <location evidence="1">Cytoplasm</location>
    </subcellularLocation>
</comment>
<comment type="similarity">
    <text evidence="1">Belongs to the endoribonuclease YbeY family.</text>
</comment>
<organism>
    <name type="scientific">Campylobacter jejuni subsp. jejuni serotype O:2 (strain ATCC 700819 / NCTC 11168)</name>
    <dbReference type="NCBI Taxonomy" id="192222"/>
    <lineage>
        <taxon>Bacteria</taxon>
        <taxon>Pseudomonadati</taxon>
        <taxon>Campylobacterota</taxon>
        <taxon>Epsilonproteobacteria</taxon>
        <taxon>Campylobacterales</taxon>
        <taxon>Campylobacteraceae</taxon>
        <taxon>Campylobacter</taxon>
    </lineage>
</organism>
<evidence type="ECO:0000255" key="1">
    <source>
        <dbReference type="HAMAP-Rule" id="MF_00009"/>
    </source>
</evidence>
<gene>
    <name evidence="1" type="primary">ybeY</name>
    <name type="ordered locus">Cj0121</name>
</gene>
<dbReference type="EC" id="3.1.-.-" evidence="1"/>
<dbReference type="EMBL" id="AL111168">
    <property type="protein sequence ID" value="CAL34292.1"/>
    <property type="molecule type" value="Genomic_DNA"/>
</dbReference>
<dbReference type="PIR" id="A81429">
    <property type="entry name" value="A81429"/>
</dbReference>
<dbReference type="RefSeq" id="WP_002851664.1">
    <property type="nucleotide sequence ID" value="NZ_SZUC01000005.1"/>
</dbReference>
<dbReference type="RefSeq" id="YP_002343581.1">
    <property type="nucleotide sequence ID" value="NC_002163.1"/>
</dbReference>
<dbReference type="SMR" id="Q9PJ06"/>
<dbReference type="IntAct" id="Q9PJ06">
    <property type="interactions" value="60"/>
</dbReference>
<dbReference type="STRING" id="192222.Cj0121"/>
<dbReference type="PaxDb" id="192222-Cj0121"/>
<dbReference type="EnsemblBacteria" id="CAL34292">
    <property type="protein sequence ID" value="CAL34292"/>
    <property type="gene ID" value="Cj0121"/>
</dbReference>
<dbReference type="GeneID" id="904453"/>
<dbReference type="KEGG" id="cje:Cj0121"/>
<dbReference type="PATRIC" id="fig|192222.6.peg.119"/>
<dbReference type="eggNOG" id="COG0319">
    <property type="taxonomic scope" value="Bacteria"/>
</dbReference>
<dbReference type="HOGENOM" id="CLU_106710_3_0_7"/>
<dbReference type="OrthoDB" id="9807740at2"/>
<dbReference type="Proteomes" id="UP000000799">
    <property type="component" value="Chromosome"/>
</dbReference>
<dbReference type="GO" id="GO:0005737">
    <property type="term" value="C:cytoplasm"/>
    <property type="evidence" value="ECO:0007669"/>
    <property type="project" value="UniProtKB-SubCell"/>
</dbReference>
<dbReference type="GO" id="GO:0004222">
    <property type="term" value="F:metalloendopeptidase activity"/>
    <property type="evidence" value="ECO:0007669"/>
    <property type="project" value="InterPro"/>
</dbReference>
<dbReference type="GO" id="GO:0004521">
    <property type="term" value="F:RNA endonuclease activity"/>
    <property type="evidence" value="ECO:0007669"/>
    <property type="project" value="UniProtKB-UniRule"/>
</dbReference>
<dbReference type="GO" id="GO:0008270">
    <property type="term" value="F:zinc ion binding"/>
    <property type="evidence" value="ECO:0007669"/>
    <property type="project" value="UniProtKB-UniRule"/>
</dbReference>
<dbReference type="GO" id="GO:0006364">
    <property type="term" value="P:rRNA processing"/>
    <property type="evidence" value="ECO:0007669"/>
    <property type="project" value="UniProtKB-UniRule"/>
</dbReference>
<dbReference type="Gene3D" id="3.40.390.30">
    <property type="entry name" value="Metalloproteases ('zincins'), catalytic domain"/>
    <property type="match status" value="1"/>
</dbReference>
<dbReference type="HAMAP" id="MF_00009">
    <property type="entry name" value="Endoribonucl_YbeY"/>
    <property type="match status" value="1"/>
</dbReference>
<dbReference type="InterPro" id="IPR023091">
    <property type="entry name" value="MetalPrtase_cat_dom_sf_prd"/>
</dbReference>
<dbReference type="InterPro" id="IPR002036">
    <property type="entry name" value="YbeY"/>
</dbReference>
<dbReference type="InterPro" id="IPR020549">
    <property type="entry name" value="YbeY_CS"/>
</dbReference>
<dbReference type="NCBIfam" id="TIGR00043">
    <property type="entry name" value="rRNA maturation RNase YbeY"/>
    <property type="match status" value="1"/>
</dbReference>
<dbReference type="PANTHER" id="PTHR46986">
    <property type="entry name" value="ENDORIBONUCLEASE YBEY, CHLOROPLASTIC"/>
    <property type="match status" value="1"/>
</dbReference>
<dbReference type="PANTHER" id="PTHR46986:SF1">
    <property type="entry name" value="ENDORIBONUCLEASE YBEY, CHLOROPLASTIC"/>
    <property type="match status" value="1"/>
</dbReference>
<dbReference type="Pfam" id="PF02130">
    <property type="entry name" value="YbeY"/>
    <property type="match status" value="1"/>
</dbReference>
<dbReference type="SUPFAM" id="SSF55486">
    <property type="entry name" value="Metalloproteases ('zincins'), catalytic domain"/>
    <property type="match status" value="1"/>
</dbReference>
<dbReference type="PROSITE" id="PS01306">
    <property type="entry name" value="UPF0054"/>
    <property type="match status" value="1"/>
</dbReference>
<feature type="chain" id="PRO_0000102430" description="Endoribonuclease YbeY">
    <location>
        <begin position="1"/>
        <end position="135"/>
    </location>
</feature>
<feature type="binding site" evidence="1">
    <location>
        <position position="94"/>
    </location>
    <ligand>
        <name>Zn(2+)</name>
        <dbReference type="ChEBI" id="CHEBI:29105"/>
        <note>catalytic</note>
    </ligand>
</feature>
<feature type="binding site" evidence="1">
    <location>
        <position position="98"/>
    </location>
    <ligand>
        <name>Zn(2+)</name>
        <dbReference type="ChEBI" id="CHEBI:29105"/>
        <note>catalytic</note>
    </ligand>
</feature>
<feature type="binding site" evidence="1">
    <location>
        <position position="104"/>
    </location>
    <ligand>
        <name>Zn(2+)</name>
        <dbReference type="ChEBI" id="CHEBI:29105"/>
        <note>catalytic</note>
    </ligand>
</feature>
<protein>
    <recommendedName>
        <fullName evidence="1">Endoribonuclease YbeY</fullName>
        <ecNumber evidence="1">3.1.-.-</ecNumber>
    </recommendedName>
</protein>
<name>YBEY_CAMJE</name>
<proteinExistence type="inferred from homology"/>